<name>ATP6_PSET1</name>
<evidence type="ECO:0000255" key="1">
    <source>
        <dbReference type="HAMAP-Rule" id="MF_01393"/>
    </source>
</evidence>
<organism>
    <name type="scientific">Pseudoalteromonas translucida (strain TAC 125)</name>
    <dbReference type="NCBI Taxonomy" id="326442"/>
    <lineage>
        <taxon>Bacteria</taxon>
        <taxon>Pseudomonadati</taxon>
        <taxon>Pseudomonadota</taxon>
        <taxon>Gammaproteobacteria</taxon>
        <taxon>Alteromonadales</taxon>
        <taxon>Pseudoalteromonadaceae</taxon>
        <taxon>Pseudoalteromonas</taxon>
    </lineage>
</organism>
<gene>
    <name evidence="1" type="primary">atpB</name>
    <name type="ordered locus">PSHAa3014</name>
</gene>
<sequence>MAAEEVTLSSHIQHHLTNAKMCSTDAGLAFNKACADSGFWTWHVDTLAWSIGLGLIFLWIFRSAAKKSTLGVPGKFQCFIEIIVEFVGDNVRDTFHGKSKLIAPLALTIFVWVFLMNLMDLIPVDFLPSFAGFVGETAFGMDSHDVYMKIVPTTDINMTSALALGVFILMVGFAIKIKGIGGFIKELTLHPFSSNNVFVQILLIPFNLLLELIALVSKPFSLALRLFGNLYAGELIFILIGAIGFMQLPLHFVWAVFHILVITLQAFLFMMLTIVYLSMASSDNH</sequence>
<reference key="1">
    <citation type="journal article" date="2005" name="Genome Res.">
        <title>Coping with cold: the genome of the versatile marine Antarctica bacterium Pseudoalteromonas haloplanktis TAC125.</title>
        <authorList>
            <person name="Medigue C."/>
            <person name="Krin E."/>
            <person name="Pascal G."/>
            <person name="Barbe V."/>
            <person name="Bernsel A."/>
            <person name="Bertin P.N."/>
            <person name="Cheung F."/>
            <person name="Cruveiller S."/>
            <person name="D'Amico S."/>
            <person name="Duilio A."/>
            <person name="Fang G."/>
            <person name="Feller G."/>
            <person name="Ho C."/>
            <person name="Mangenot S."/>
            <person name="Marino G."/>
            <person name="Nilsson J."/>
            <person name="Parrilli E."/>
            <person name="Rocha E.P.C."/>
            <person name="Rouy Z."/>
            <person name="Sekowska A."/>
            <person name="Tutino M.L."/>
            <person name="Vallenet D."/>
            <person name="von Heijne G."/>
            <person name="Danchin A."/>
        </authorList>
    </citation>
    <scope>NUCLEOTIDE SEQUENCE [LARGE SCALE GENOMIC DNA]</scope>
    <source>
        <strain>TAC 125</strain>
    </source>
</reference>
<dbReference type="EMBL" id="CR954246">
    <property type="protein sequence ID" value="CAI88043.1"/>
    <property type="molecule type" value="Genomic_DNA"/>
</dbReference>
<dbReference type="SMR" id="Q3IK44"/>
<dbReference type="STRING" id="326442.PSHAa3014"/>
<dbReference type="KEGG" id="pha:PSHAa3014"/>
<dbReference type="PATRIC" id="fig|326442.8.peg.2904"/>
<dbReference type="eggNOG" id="COG0356">
    <property type="taxonomic scope" value="Bacteria"/>
</dbReference>
<dbReference type="HOGENOM" id="CLU_041018_1_0_6"/>
<dbReference type="BioCyc" id="PHAL326442:PSHA_RS14790-MONOMER"/>
<dbReference type="Proteomes" id="UP000006843">
    <property type="component" value="Chromosome I"/>
</dbReference>
<dbReference type="GO" id="GO:0005886">
    <property type="term" value="C:plasma membrane"/>
    <property type="evidence" value="ECO:0007669"/>
    <property type="project" value="UniProtKB-SubCell"/>
</dbReference>
<dbReference type="GO" id="GO:0045259">
    <property type="term" value="C:proton-transporting ATP synthase complex"/>
    <property type="evidence" value="ECO:0007669"/>
    <property type="project" value="UniProtKB-KW"/>
</dbReference>
<dbReference type="GO" id="GO:0046933">
    <property type="term" value="F:proton-transporting ATP synthase activity, rotational mechanism"/>
    <property type="evidence" value="ECO:0007669"/>
    <property type="project" value="UniProtKB-UniRule"/>
</dbReference>
<dbReference type="GO" id="GO:0042777">
    <property type="term" value="P:proton motive force-driven plasma membrane ATP synthesis"/>
    <property type="evidence" value="ECO:0007669"/>
    <property type="project" value="TreeGrafter"/>
</dbReference>
<dbReference type="CDD" id="cd00310">
    <property type="entry name" value="ATP-synt_Fo_a_6"/>
    <property type="match status" value="1"/>
</dbReference>
<dbReference type="FunFam" id="1.20.120.220:FF:000002">
    <property type="entry name" value="ATP synthase subunit a"/>
    <property type="match status" value="1"/>
</dbReference>
<dbReference type="Gene3D" id="1.20.120.220">
    <property type="entry name" value="ATP synthase, F0 complex, subunit A"/>
    <property type="match status" value="1"/>
</dbReference>
<dbReference type="HAMAP" id="MF_01393">
    <property type="entry name" value="ATP_synth_a_bact"/>
    <property type="match status" value="1"/>
</dbReference>
<dbReference type="InterPro" id="IPR045082">
    <property type="entry name" value="ATP_syn_F0_a_bact/chloroplast"/>
</dbReference>
<dbReference type="InterPro" id="IPR000568">
    <property type="entry name" value="ATP_synth_F0_asu"/>
</dbReference>
<dbReference type="InterPro" id="IPR023011">
    <property type="entry name" value="ATP_synth_F0_asu_AS"/>
</dbReference>
<dbReference type="InterPro" id="IPR035908">
    <property type="entry name" value="F0_ATP_A_sf"/>
</dbReference>
<dbReference type="NCBIfam" id="TIGR01131">
    <property type="entry name" value="ATP_synt_6_or_A"/>
    <property type="match status" value="1"/>
</dbReference>
<dbReference type="NCBIfam" id="NF004477">
    <property type="entry name" value="PRK05815.1-1"/>
    <property type="match status" value="1"/>
</dbReference>
<dbReference type="PANTHER" id="PTHR42823">
    <property type="entry name" value="ATP SYNTHASE SUBUNIT A, CHLOROPLASTIC"/>
    <property type="match status" value="1"/>
</dbReference>
<dbReference type="PANTHER" id="PTHR42823:SF3">
    <property type="entry name" value="ATP SYNTHASE SUBUNIT A, CHLOROPLASTIC"/>
    <property type="match status" value="1"/>
</dbReference>
<dbReference type="Pfam" id="PF00119">
    <property type="entry name" value="ATP-synt_A"/>
    <property type="match status" value="1"/>
</dbReference>
<dbReference type="SUPFAM" id="SSF81336">
    <property type="entry name" value="F1F0 ATP synthase subunit A"/>
    <property type="match status" value="1"/>
</dbReference>
<dbReference type="PROSITE" id="PS00449">
    <property type="entry name" value="ATPASE_A"/>
    <property type="match status" value="1"/>
</dbReference>
<accession>Q3IK44</accession>
<comment type="function">
    <text evidence="1">Key component of the proton channel; it plays a direct role in the translocation of protons across the membrane.</text>
</comment>
<comment type="subunit">
    <text evidence="1">F-type ATPases have 2 components, CF(1) - the catalytic core - and CF(0) - the membrane proton channel. CF(1) has five subunits: alpha(3), beta(3), gamma(1), delta(1), epsilon(1). CF(0) has three main subunits: a(1), b(2) and c(9-12). The alpha and beta chains form an alternating ring which encloses part of the gamma chain. CF(1) is attached to CF(0) by a central stalk formed by the gamma and epsilon chains, while a peripheral stalk is formed by the delta and b chains.</text>
</comment>
<comment type="subcellular location">
    <subcellularLocation>
        <location evidence="1">Cell inner membrane</location>
        <topology evidence="1">Multi-pass membrane protein</topology>
    </subcellularLocation>
</comment>
<comment type="similarity">
    <text evidence="1">Belongs to the ATPase A chain family.</text>
</comment>
<keyword id="KW-0066">ATP synthesis</keyword>
<keyword id="KW-0997">Cell inner membrane</keyword>
<keyword id="KW-1003">Cell membrane</keyword>
<keyword id="KW-0138">CF(0)</keyword>
<keyword id="KW-0375">Hydrogen ion transport</keyword>
<keyword id="KW-0406">Ion transport</keyword>
<keyword id="KW-0472">Membrane</keyword>
<keyword id="KW-1185">Reference proteome</keyword>
<keyword id="KW-0812">Transmembrane</keyword>
<keyword id="KW-1133">Transmembrane helix</keyword>
<keyword id="KW-0813">Transport</keyword>
<proteinExistence type="inferred from homology"/>
<feature type="chain" id="PRO_0000362390" description="ATP synthase subunit a">
    <location>
        <begin position="1"/>
        <end position="285"/>
    </location>
</feature>
<feature type="transmembrane region" description="Helical" evidence="1">
    <location>
        <begin position="41"/>
        <end position="61"/>
    </location>
</feature>
<feature type="transmembrane region" description="Helical" evidence="1">
    <location>
        <begin position="102"/>
        <end position="122"/>
    </location>
</feature>
<feature type="transmembrane region" description="Helical" evidence="1">
    <location>
        <begin position="164"/>
        <end position="184"/>
    </location>
</feature>
<feature type="transmembrane region" description="Helical" evidence="1">
    <location>
        <begin position="197"/>
        <end position="217"/>
    </location>
</feature>
<feature type="transmembrane region" description="Helical" evidence="1">
    <location>
        <begin position="226"/>
        <end position="246"/>
    </location>
</feature>
<feature type="transmembrane region" description="Helical" evidence="1">
    <location>
        <begin position="252"/>
        <end position="272"/>
    </location>
</feature>
<protein>
    <recommendedName>
        <fullName evidence="1">ATP synthase subunit a</fullName>
    </recommendedName>
    <alternativeName>
        <fullName evidence="1">ATP synthase F0 sector subunit a</fullName>
    </alternativeName>
    <alternativeName>
        <fullName evidence="1">F-ATPase subunit 6</fullName>
    </alternativeName>
</protein>